<comment type="function">
    <text evidence="1">Removes the formyl group from the N-terminal Met of newly synthesized proteins. Requires at least a dipeptide for an efficient rate of reaction. N-terminal L-methionine is a prerequisite for activity but the enzyme has broad specificity at other positions.</text>
</comment>
<comment type="catalytic activity">
    <reaction evidence="1">
        <text>N-terminal N-formyl-L-methionyl-[peptide] + H2O = N-terminal L-methionyl-[peptide] + formate</text>
        <dbReference type="Rhea" id="RHEA:24420"/>
        <dbReference type="Rhea" id="RHEA-COMP:10639"/>
        <dbReference type="Rhea" id="RHEA-COMP:10640"/>
        <dbReference type="ChEBI" id="CHEBI:15377"/>
        <dbReference type="ChEBI" id="CHEBI:15740"/>
        <dbReference type="ChEBI" id="CHEBI:49298"/>
        <dbReference type="ChEBI" id="CHEBI:64731"/>
        <dbReference type="EC" id="3.5.1.88"/>
    </reaction>
</comment>
<comment type="cofactor">
    <cofactor evidence="1">
        <name>Fe(2+)</name>
        <dbReference type="ChEBI" id="CHEBI:29033"/>
    </cofactor>
    <text evidence="1">Binds 1 Fe(2+) ion.</text>
</comment>
<comment type="similarity">
    <text evidence="1">Belongs to the polypeptide deformylase family.</text>
</comment>
<proteinExistence type="inferred from homology"/>
<organism>
    <name type="scientific">Clostridium beijerinckii (strain ATCC 51743 / NCIMB 8052)</name>
    <name type="common">Clostridium acetobutylicum</name>
    <dbReference type="NCBI Taxonomy" id="290402"/>
    <lineage>
        <taxon>Bacteria</taxon>
        <taxon>Bacillati</taxon>
        <taxon>Bacillota</taxon>
        <taxon>Clostridia</taxon>
        <taxon>Eubacteriales</taxon>
        <taxon>Clostridiaceae</taxon>
        <taxon>Clostridium</taxon>
    </lineage>
</organism>
<feature type="chain" id="PRO_0000082768" description="Peptide deformylase">
    <location>
        <begin position="1"/>
        <end position="136"/>
    </location>
</feature>
<feature type="active site" evidence="1">
    <location>
        <position position="127"/>
    </location>
</feature>
<feature type="binding site" evidence="1">
    <location>
        <position position="85"/>
    </location>
    <ligand>
        <name>Fe cation</name>
        <dbReference type="ChEBI" id="CHEBI:24875"/>
    </ligand>
</feature>
<feature type="binding site" evidence="1">
    <location>
        <position position="126"/>
    </location>
    <ligand>
        <name>Fe cation</name>
        <dbReference type="ChEBI" id="CHEBI:24875"/>
    </ligand>
</feature>
<feature type="binding site" evidence="1">
    <location>
        <position position="130"/>
    </location>
    <ligand>
        <name>Fe cation</name>
        <dbReference type="ChEBI" id="CHEBI:24875"/>
    </ligand>
</feature>
<name>DEF_CLOB8</name>
<sequence>MIKPIVKDILFLGQKSEEATKNDMVVIDDLIDTLRANLEHCVGLAANMIGVKKRILVFTVGNLIVPMINPVILKKEKPYETEESCLSLIGFRKTKRYETIEVTYLDRNFNKKKQVFNGFTAQIIQHEMDHFEGIII</sequence>
<accession>O08450</accession>
<accession>A6LZ54</accession>
<protein>
    <recommendedName>
        <fullName evidence="1">Peptide deformylase</fullName>
        <shortName evidence="1">PDF</shortName>
        <ecNumber evidence="1">3.5.1.88</ecNumber>
    </recommendedName>
    <alternativeName>
        <fullName evidence="1">Polypeptide deformylase</fullName>
    </alternativeName>
</protein>
<dbReference type="EC" id="3.5.1.88" evidence="1"/>
<dbReference type="EMBL" id="Z96934">
    <property type="protein sequence ID" value="CAB09662.1"/>
    <property type="molecule type" value="Genomic_DNA"/>
</dbReference>
<dbReference type="EMBL" id="CP000721">
    <property type="protein sequence ID" value="ABR35634.1"/>
    <property type="molecule type" value="Genomic_DNA"/>
</dbReference>
<dbReference type="RefSeq" id="WP_012059684.1">
    <property type="nucleotide sequence ID" value="NC_009617.1"/>
</dbReference>
<dbReference type="SMR" id="O08450"/>
<dbReference type="KEGG" id="cbe:Cbei_3511"/>
<dbReference type="eggNOG" id="COG0242">
    <property type="taxonomic scope" value="Bacteria"/>
</dbReference>
<dbReference type="HOGENOM" id="CLU_061901_3_1_9"/>
<dbReference type="Proteomes" id="UP000000565">
    <property type="component" value="Chromosome"/>
</dbReference>
<dbReference type="GO" id="GO:0046872">
    <property type="term" value="F:metal ion binding"/>
    <property type="evidence" value="ECO:0007669"/>
    <property type="project" value="UniProtKB-KW"/>
</dbReference>
<dbReference type="GO" id="GO:0042586">
    <property type="term" value="F:peptide deformylase activity"/>
    <property type="evidence" value="ECO:0007669"/>
    <property type="project" value="UniProtKB-UniRule"/>
</dbReference>
<dbReference type="GO" id="GO:0043686">
    <property type="term" value="P:co-translational protein modification"/>
    <property type="evidence" value="ECO:0007669"/>
    <property type="project" value="TreeGrafter"/>
</dbReference>
<dbReference type="GO" id="GO:0006412">
    <property type="term" value="P:translation"/>
    <property type="evidence" value="ECO:0007669"/>
    <property type="project" value="UniProtKB-UniRule"/>
</dbReference>
<dbReference type="CDD" id="cd00487">
    <property type="entry name" value="Pep_deformylase"/>
    <property type="match status" value="1"/>
</dbReference>
<dbReference type="Gene3D" id="3.90.45.10">
    <property type="entry name" value="Peptide deformylase"/>
    <property type="match status" value="1"/>
</dbReference>
<dbReference type="HAMAP" id="MF_00163">
    <property type="entry name" value="Pep_deformylase"/>
    <property type="match status" value="1"/>
</dbReference>
<dbReference type="InterPro" id="IPR023635">
    <property type="entry name" value="Peptide_deformylase"/>
</dbReference>
<dbReference type="InterPro" id="IPR036821">
    <property type="entry name" value="Peptide_deformylase_sf"/>
</dbReference>
<dbReference type="NCBIfam" id="NF006670">
    <property type="entry name" value="PRK09218.1"/>
    <property type="match status" value="1"/>
</dbReference>
<dbReference type="PANTHER" id="PTHR10458">
    <property type="entry name" value="PEPTIDE DEFORMYLASE"/>
    <property type="match status" value="1"/>
</dbReference>
<dbReference type="PANTHER" id="PTHR10458:SF22">
    <property type="entry name" value="PEPTIDE DEFORMYLASE"/>
    <property type="match status" value="1"/>
</dbReference>
<dbReference type="Pfam" id="PF01327">
    <property type="entry name" value="Pep_deformylase"/>
    <property type="match status" value="1"/>
</dbReference>
<dbReference type="PIRSF" id="PIRSF004749">
    <property type="entry name" value="Pep_def"/>
    <property type="match status" value="1"/>
</dbReference>
<dbReference type="PRINTS" id="PR01576">
    <property type="entry name" value="PDEFORMYLASE"/>
</dbReference>
<dbReference type="SUPFAM" id="SSF56420">
    <property type="entry name" value="Peptide deformylase"/>
    <property type="match status" value="1"/>
</dbReference>
<evidence type="ECO:0000255" key="1">
    <source>
        <dbReference type="HAMAP-Rule" id="MF_00163"/>
    </source>
</evidence>
<gene>
    <name evidence="1" type="primary">def</name>
    <name type="synonym">fms</name>
    <name type="ordered locus">Cbei_3511</name>
</gene>
<reference key="1">
    <citation type="journal article" date="1998" name="Appl. Environ. Microbiol.">
        <title>Truncation of peptide deformylase reduces the growth rate and stabilizes solvent production in Clostridium beijerinckii NCIMB 8052.</title>
        <authorList>
            <person name="Evans V.J."/>
            <person name="Liyanage H."/>
            <person name="Ravagnani A."/>
            <person name="Young M."/>
            <person name="Kashket E.R."/>
        </authorList>
    </citation>
    <scope>NUCLEOTIDE SEQUENCE [GENOMIC DNA]</scope>
</reference>
<reference key="2">
    <citation type="submission" date="2007-06" db="EMBL/GenBank/DDBJ databases">
        <title>Complete sequence of Clostridium beijerinckii NCIMB 8052.</title>
        <authorList>
            <consortium name="US DOE Joint Genome Institute"/>
            <person name="Copeland A."/>
            <person name="Lucas S."/>
            <person name="Lapidus A."/>
            <person name="Barry K."/>
            <person name="Detter J.C."/>
            <person name="Glavina del Rio T."/>
            <person name="Hammon N."/>
            <person name="Israni S."/>
            <person name="Dalin E."/>
            <person name="Tice H."/>
            <person name="Pitluck S."/>
            <person name="Sims D."/>
            <person name="Brettin T."/>
            <person name="Bruce D."/>
            <person name="Tapia R."/>
            <person name="Brainard J."/>
            <person name="Schmutz J."/>
            <person name="Larimer F."/>
            <person name="Land M."/>
            <person name="Hauser L."/>
            <person name="Kyrpides N."/>
            <person name="Mikhailova N."/>
            <person name="Bennet G."/>
            <person name="Cann I."/>
            <person name="Chen J.-S."/>
            <person name="Contreras A.L."/>
            <person name="Jones D."/>
            <person name="Kashket E."/>
            <person name="Mitchell W."/>
            <person name="Stoddard S."/>
            <person name="Schwarz W."/>
            <person name="Qureshi N."/>
            <person name="Young M."/>
            <person name="Shi Z."/>
            <person name="Ezeji T."/>
            <person name="White B."/>
            <person name="Blaschek H."/>
            <person name="Richardson P."/>
        </authorList>
    </citation>
    <scope>NUCLEOTIDE SEQUENCE [LARGE SCALE GENOMIC DNA]</scope>
    <source>
        <strain>ATCC 51743 / NCIMB 8052</strain>
    </source>
</reference>
<keyword id="KW-0378">Hydrolase</keyword>
<keyword id="KW-0408">Iron</keyword>
<keyword id="KW-0479">Metal-binding</keyword>
<keyword id="KW-0648">Protein biosynthesis</keyword>